<gene>
    <name evidence="1" type="primary">rsmG</name>
    <name type="ordered locus">CHU_1194</name>
</gene>
<accession>Q11VU7</accession>
<proteinExistence type="inferred from homology"/>
<protein>
    <recommendedName>
        <fullName evidence="1">Ribosomal RNA small subunit methyltransferase G</fullName>
        <ecNumber evidence="1">2.1.1.-</ecNumber>
    </recommendedName>
    <alternativeName>
        <fullName evidence="1">16S rRNA 7-methylguanosine methyltransferase</fullName>
        <shortName evidence="1">16S rRNA m7G methyltransferase</shortName>
    </alternativeName>
</protein>
<name>RSMG_CYTH3</name>
<sequence length="207" mass="23795">MQIIEKYFKHLSPEQVKQFGALHSLYTEWNEKINVVSRKDIDQLYERHVLHSLGIAKVMAFKPGTRILDVGTGGGFPGIPLSILFPESDFHLIDSIGKKIKVVEEVSAGAGIKNIRTTHGRAEDVTDRYHFVVSRAVTRFKPFWGWVAKKFSDEQFNDLNNGILYLKGGDLDEEIQELNRPAYEYDLNMFFEEEFFDTKKVVHVPAF</sequence>
<reference key="1">
    <citation type="journal article" date="2007" name="Appl. Environ. Microbiol.">
        <title>Genome sequence of the cellulolytic gliding bacterium Cytophaga hutchinsonii.</title>
        <authorList>
            <person name="Xie G."/>
            <person name="Bruce D.C."/>
            <person name="Challacombe J.F."/>
            <person name="Chertkov O."/>
            <person name="Detter J.C."/>
            <person name="Gilna P."/>
            <person name="Han C.S."/>
            <person name="Lucas S."/>
            <person name="Misra M."/>
            <person name="Myers G.L."/>
            <person name="Richardson P."/>
            <person name="Tapia R."/>
            <person name="Thayer N."/>
            <person name="Thompson L.S."/>
            <person name="Brettin T.S."/>
            <person name="Henrissat B."/>
            <person name="Wilson D.B."/>
            <person name="McBride M.J."/>
        </authorList>
    </citation>
    <scope>NUCLEOTIDE SEQUENCE [LARGE SCALE GENOMIC DNA]</scope>
    <source>
        <strain>ATCC 33406 / DSM 1761 / JCM 20678 / CIP 103989 / IAM 12607 / NBRC 15051 / NCIMB 9469 / D465</strain>
    </source>
</reference>
<keyword id="KW-0963">Cytoplasm</keyword>
<keyword id="KW-0489">Methyltransferase</keyword>
<keyword id="KW-1185">Reference proteome</keyword>
<keyword id="KW-0698">rRNA processing</keyword>
<keyword id="KW-0949">S-adenosyl-L-methionine</keyword>
<keyword id="KW-0808">Transferase</keyword>
<organism>
    <name type="scientific">Cytophaga hutchinsonii (strain ATCC 33406 / DSM 1761 / CIP 103989 / NBRC 15051 / NCIMB 9469 / D465)</name>
    <dbReference type="NCBI Taxonomy" id="269798"/>
    <lineage>
        <taxon>Bacteria</taxon>
        <taxon>Pseudomonadati</taxon>
        <taxon>Bacteroidota</taxon>
        <taxon>Cytophagia</taxon>
        <taxon>Cytophagales</taxon>
        <taxon>Cytophagaceae</taxon>
        <taxon>Cytophaga</taxon>
    </lineage>
</organism>
<feature type="chain" id="PRO_0000335340" description="Ribosomal RNA small subunit methyltransferase G">
    <location>
        <begin position="1"/>
        <end position="207"/>
    </location>
</feature>
<feature type="binding site" evidence="1">
    <location>
        <position position="71"/>
    </location>
    <ligand>
        <name>S-adenosyl-L-methionine</name>
        <dbReference type="ChEBI" id="CHEBI:59789"/>
    </ligand>
</feature>
<feature type="binding site" evidence="1">
    <location>
        <position position="76"/>
    </location>
    <ligand>
        <name>S-adenosyl-L-methionine</name>
        <dbReference type="ChEBI" id="CHEBI:59789"/>
    </ligand>
</feature>
<feature type="binding site" evidence="1">
    <location>
        <begin position="122"/>
        <end position="123"/>
    </location>
    <ligand>
        <name>S-adenosyl-L-methionine</name>
        <dbReference type="ChEBI" id="CHEBI:59789"/>
    </ligand>
</feature>
<feature type="binding site" evidence="1">
    <location>
        <position position="135"/>
    </location>
    <ligand>
        <name>S-adenosyl-L-methionine</name>
        <dbReference type="ChEBI" id="CHEBI:59789"/>
    </ligand>
</feature>
<evidence type="ECO:0000255" key="1">
    <source>
        <dbReference type="HAMAP-Rule" id="MF_00074"/>
    </source>
</evidence>
<dbReference type="EC" id="2.1.1.-" evidence="1"/>
<dbReference type="EMBL" id="CP000383">
    <property type="protein sequence ID" value="ABG58469.1"/>
    <property type="molecule type" value="Genomic_DNA"/>
</dbReference>
<dbReference type="RefSeq" id="WP_011584584.1">
    <property type="nucleotide sequence ID" value="NC_008255.1"/>
</dbReference>
<dbReference type="SMR" id="Q11VU7"/>
<dbReference type="STRING" id="269798.CHU_1194"/>
<dbReference type="KEGG" id="chu:CHU_1194"/>
<dbReference type="eggNOG" id="COG0357">
    <property type="taxonomic scope" value="Bacteria"/>
</dbReference>
<dbReference type="HOGENOM" id="CLU_065341_2_2_10"/>
<dbReference type="OrthoDB" id="9808773at2"/>
<dbReference type="Proteomes" id="UP000001822">
    <property type="component" value="Chromosome"/>
</dbReference>
<dbReference type="GO" id="GO:0005829">
    <property type="term" value="C:cytosol"/>
    <property type="evidence" value="ECO:0007669"/>
    <property type="project" value="TreeGrafter"/>
</dbReference>
<dbReference type="GO" id="GO:0070043">
    <property type="term" value="F:rRNA (guanine-N7-)-methyltransferase activity"/>
    <property type="evidence" value="ECO:0007669"/>
    <property type="project" value="UniProtKB-UniRule"/>
</dbReference>
<dbReference type="Gene3D" id="3.40.50.150">
    <property type="entry name" value="Vaccinia Virus protein VP39"/>
    <property type="match status" value="1"/>
</dbReference>
<dbReference type="HAMAP" id="MF_00074">
    <property type="entry name" value="16SrRNA_methyltr_G"/>
    <property type="match status" value="1"/>
</dbReference>
<dbReference type="InterPro" id="IPR003682">
    <property type="entry name" value="rRNA_ssu_MeTfrase_G"/>
</dbReference>
<dbReference type="InterPro" id="IPR029063">
    <property type="entry name" value="SAM-dependent_MTases_sf"/>
</dbReference>
<dbReference type="NCBIfam" id="TIGR00138">
    <property type="entry name" value="rsmG_gidB"/>
    <property type="match status" value="1"/>
</dbReference>
<dbReference type="PANTHER" id="PTHR31760">
    <property type="entry name" value="S-ADENOSYL-L-METHIONINE-DEPENDENT METHYLTRANSFERASES SUPERFAMILY PROTEIN"/>
    <property type="match status" value="1"/>
</dbReference>
<dbReference type="PANTHER" id="PTHR31760:SF0">
    <property type="entry name" value="S-ADENOSYL-L-METHIONINE-DEPENDENT METHYLTRANSFERASES SUPERFAMILY PROTEIN"/>
    <property type="match status" value="1"/>
</dbReference>
<dbReference type="Pfam" id="PF02527">
    <property type="entry name" value="GidB"/>
    <property type="match status" value="1"/>
</dbReference>
<dbReference type="PIRSF" id="PIRSF003078">
    <property type="entry name" value="GidB"/>
    <property type="match status" value="1"/>
</dbReference>
<dbReference type="SUPFAM" id="SSF53335">
    <property type="entry name" value="S-adenosyl-L-methionine-dependent methyltransferases"/>
    <property type="match status" value="1"/>
</dbReference>
<comment type="function">
    <text evidence="1">Specifically methylates the N7 position of a guanine in 16S rRNA.</text>
</comment>
<comment type="subcellular location">
    <subcellularLocation>
        <location evidence="1">Cytoplasm</location>
    </subcellularLocation>
</comment>
<comment type="similarity">
    <text evidence="1">Belongs to the methyltransferase superfamily. RNA methyltransferase RsmG family.</text>
</comment>